<keyword id="KW-1185">Reference proteome</keyword>
<gene>
    <name evidence="1" type="primary">yhbQ</name>
    <name type="ordered locus">SSON_3301</name>
</gene>
<dbReference type="EMBL" id="CP000038">
    <property type="protein sequence ID" value="AAZ89876.1"/>
    <property type="molecule type" value="Genomic_DNA"/>
</dbReference>
<dbReference type="RefSeq" id="WP_000189314.1">
    <property type="nucleotide sequence ID" value="NC_007384.1"/>
</dbReference>
<dbReference type="SMR" id="Q3YX86"/>
<dbReference type="GeneID" id="93778829"/>
<dbReference type="KEGG" id="ssn:SSON_3301"/>
<dbReference type="HOGENOM" id="CLU_135650_0_1_6"/>
<dbReference type="Proteomes" id="UP000002529">
    <property type="component" value="Chromosome"/>
</dbReference>
<dbReference type="CDD" id="cd10456">
    <property type="entry name" value="GIY-YIG_UPF0213"/>
    <property type="match status" value="1"/>
</dbReference>
<dbReference type="FunFam" id="3.40.1440.10:FF:000002">
    <property type="entry name" value="UPF0213 protein YhbQ"/>
    <property type="match status" value="1"/>
</dbReference>
<dbReference type="Gene3D" id="3.40.1440.10">
    <property type="entry name" value="GIY-YIG endonuclease"/>
    <property type="match status" value="1"/>
</dbReference>
<dbReference type="HAMAP" id="MF_01029">
    <property type="entry name" value="UPF0213"/>
    <property type="match status" value="1"/>
</dbReference>
<dbReference type="InterPro" id="IPR000305">
    <property type="entry name" value="GIY-YIG_endonuc"/>
</dbReference>
<dbReference type="InterPro" id="IPR035901">
    <property type="entry name" value="GIY-YIG_endonuc_sf"/>
</dbReference>
<dbReference type="InterPro" id="IPR050190">
    <property type="entry name" value="UPF0213_domain"/>
</dbReference>
<dbReference type="InterPro" id="IPR022992">
    <property type="entry name" value="UPF0213_GIY-YIG_endonuc"/>
</dbReference>
<dbReference type="PANTHER" id="PTHR34477">
    <property type="entry name" value="UPF0213 PROTEIN YHBQ"/>
    <property type="match status" value="1"/>
</dbReference>
<dbReference type="PANTHER" id="PTHR34477:SF1">
    <property type="entry name" value="UPF0213 PROTEIN YHBQ"/>
    <property type="match status" value="1"/>
</dbReference>
<dbReference type="Pfam" id="PF01541">
    <property type="entry name" value="GIY-YIG"/>
    <property type="match status" value="1"/>
</dbReference>
<dbReference type="SMART" id="SM00465">
    <property type="entry name" value="GIYc"/>
    <property type="match status" value="1"/>
</dbReference>
<dbReference type="SUPFAM" id="SSF82771">
    <property type="entry name" value="GIY-YIG endonuclease"/>
    <property type="match status" value="1"/>
</dbReference>
<dbReference type="PROSITE" id="PS50164">
    <property type="entry name" value="GIY_YIG"/>
    <property type="match status" value="1"/>
</dbReference>
<feature type="chain" id="PRO_1000063684" description="UPF0213 protein YhbQ">
    <location>
        <begin position="1"/>
        <end position="100"/>
    </location>
</feature>
<feature type="domain" description="GIY-YIG" evidence="1">
    <location>
        <begin position="2"/>
        <end position="77"/>
    </location>
</feature>
<organism>
    <name type="scientific">Shigella sonnei (strain Ss046)</name>
    <dbReference type="NCBI Taxonomy" id="300269"/>
    <lineage>
        <taxon>Bacteria</taxon>
        <taxon>Pseudomonadati</taxon>
        <taxon>Pseudomonadota</taxon>
        <taxon>Gammaproteobacteria</taxon>
        <taxon>Enterobacterales</taxon>
        <taxon>Enterobacteriaceae</taxon>
        <taxon>Shigella</taxon>
    </lineage>
</organism>
<name>YHBQ_SHISS</name>
<proteinExistence type="inferred from homology"/>
<accession>Q3YX86</accession>
<reference key="1">
    <citation type="journal article" date="2005" name="Nucleic Acids Res.">
        <title>Genome dynamics and diversity of Shigella species, the etiologic agents of bacillary dysentery.</title>
        <authorList>
            <person name="Yang F."/>
            <person name="Yang J."/>
            <person name="Zhang X."/>
            <person name="Chen L."/>
            <person name="Jiang Y."/>
            <person name="Yan Y."/>
            <person name="Tang X."/>
            <person name="Wang J."/>
            <person name="Xiong Z."/>
            <person name="Dong J."/>
            <person name="Xue Y."/>
            <person name="Zhu Y."/>
            <person name="Xu X."/>
            <person name="Sun L."/>
            <person name="Chen S."/>
            <person name="Nie H."/>
            <person name="Peng J."/>
            <person name="Xu J."/>
            <person name="Wang Y."/>
            <person name="Yuan Z."/>
            <person name="Wen Y."/>
            <person name="Yao Z."/>
            <person name="Shen Y."/>
            <person name="Qiang B."/>
            <person name="Hou Y."/>
            <person name="Yu J."/>
            <person name="Jin Q."/>
        </authorList>
    </citation>
    <scope>NUCLEOTIDE SEQUENCE [LARGE SCALE GENOMIC DNA]</scope>
    <source>
        <strain>Ss046</strain>
    </source>
</reference>
<sequence length="100" mass="11242">MTPWFLYLIRTADNKLYTGITTDVERRYQQHQSGKGAKALRGKGELTLAFSAPVGDRSLALRAEYRVKQLTKRQKERLVAEGAGFAELLSSLQTPEIKSD</sequence>
<protein>
    <recommendedName>
        <fullName evidence="1">UPF0213 protein YhbQ</fullName>
    </recommendedName>
</protein>
<comment type="similarity">
    <text evidence="1">Belongs to the UPF0213 family.</text>
</comment>
<evidence type="ECO:0000255" key="1">
    <source>
        <dbReference type="HAMAP-Rule" id="MF_01029"/>
    </source>
</evidence>